<gene>
    <name evidence="7" type="primary">fam20b</name>
    <name type="ORF">si:ch211-195o19.3</name>
</gene>
<organism>
    <name type="scientific">Danio rerio</name>
    <name type="common">Zebrafish</name>
    <name type="synonym">Brachydanio rerio</name>
    <dbReference type="NCBI Taxonomy" id="7955"/>
    <lineage>
        <taxon>Eukaryota</taxon>
        <taxon>Metazoa</taxon>
        <taxon>Chordata</taxon>
        <taxon>Craniata</taxon>
        <taxon>Vertebrata</taxon>
        <taxon>Euteleostomi</taxon>
        <taxon>Actinopterygii</taxon>
        <taxon>Neopterygii</taxon>
        <taxon>Teleostei</taxon>
        <taxon>Ostariophysi</taxon>
        <taxon>Cypriniformes</taxon>
        <taxon>Danionidae</taxon>
        <taxon>Danioninae</taxon>
        <taxon>Danio</taxon>
    </lineage>
</organism>
<accession>Q5RH51</accession>
<reference key="1">
    <citation type="journal article" date="2013" name="Nature">
        <title>The zebrafish reference genome sequence and its relationship to the human genome.</title>
        <authorList>
            <person name="Howe K."/>
            <person name="Clark M.D."/>
            <person name="Torroja C.F."/>
            <person name="Torrance J."/>
            <person name="Berthelot C."/>
            <person name="Muffato M."/>
            <person name="Collins J.E."/>
            <person name="Humphray S."/>
            <person name="McLaren K."/>
            <person name="Matthews L."/>
            <person name="McLaren S."/>
            <person name="Sealy I."/>
            <person name="Caccamo M."/>
            <person name="Churcher C."/>
            <person name="Scott C."/>
            <person name="Barrett J.C."/>
            <person name="Koch R."/>
            <person name="Rauch G.J."/>
            <person name="White S."/>
            <person name="Chow W."/>
            <person name="Kilian B."/>
            <person name="Quintais L.T."/>
            <person name="Guerra-Assuncao J.A."/>
            <person name="Zhou Y."/>
            <person name="Gu Y."/>
            <person name="Yen J."/>
            <person name="Vogel J.H."/>
            <person name="Eyre T."/>
            <person name="Redmond S."/>
            <person name="Banerjee R."/>
            <person name="Chi J."/>
            <person name="Fu B."/>
            <person name="Langley E."/>
            <person name="Maguire S.F."/>
            <person name="Laird G.K."/>
            <person name="Lloyd D."/>
            <person name="Kenyon E."/>
            <person name="Donaldson S."/>
            <person name="Sehra H."/>
            <person name="Almeida-King J."/>
            <person name="Loveland J."/>
            <person name="Trevanion S."/>
            <person name="Jones M."/>
            <person name="Quail M."/>
            <person name="Willey D."/>
            <person name="Hunt A."/>
            <person name="Burton J."/>
            <person name="Sims S."/>
            <person name="McLay K."/>
            <person name="Plumb B."/>
            <person name="Davis J."/>
            <person name="Clee C."/>
            <person name="Oliver K."/>
            <person name="Clark R."/>
            <person name="Riddle C."/>
            <person name="Elliot D."/>
            <person name="Threadgold G."/>
            <person name="Harden G."/>
            <person name="Ware D."/>
            <person name="Begum S."/>
            <person name="Mortimore B."/>
            <person name="Kerry G."/>
            <person name="Heath P."/>
            <person name="Phillimore B."/>
            <person name="Tracey A."/>
            <person name="Corby N."/>
            <person name="Dunn M."/>
            <person name="Johnson C."/>
            <person name="Wood J."/>
            <person name="Clark S."/>
            <person name="Pelan S."/>
            <person name="Griffiths G."/>
            <person name="Smith M."/>
            <person name="Glithero R."/>
            <person name="Howden P."/>
            <person name="Barker N."/>
            <person name="Lloyd C."/>
            <person name="Stevens C."/>
            <person name="Harley J."/>
            <person name="Holt K."/>
            <person name="Panagiotidis G."/>
            <person name="Lovell J."/>
            <person name="Beasley H."/>
            <person name="Henderson C."/>
            <person name="Gordon D."/>
            <person name="Auger K."/>
            <person name="Wright D."/>
            <person name="Collins J."/>
            <person name="Raisen C."/>
            <person name="Dyer L."/>
            <person name="Leung K."/>
            <person name="Robertson L."/>
            <person name="Ambridge K."/>
            <person name="Leongamornlert D."/>
            <person name="McGuire S."/>
            <person name="Gilderthorp R."/>
            <person name="Griffiths C."/>
            <person name="Manthravadi D."/>
            <person name="Nichol S."/>
            <person name="Barker G."/>
            <person name="Whitehead S."/>
            <person name="Kay M."/>
            <person name="Brown J."/>
            <person name="Murnane C."/>
            <person name="Gray E."/>
            <person name="Humphries M."/>
            <person name="Sycamore N."/>
            <person name="Barker D."/>
            <person name="Saunders D."/>
            <person name="Wallis J."/>
            <person name="Babbage A."/>
            <person name="Hammond S."/>
            <person name="Mashreghi-Mohammadi M."/>
            <person name="Barr L."/>
            <person name="Martin S."/>
            <person name="Wray P."/>
            <person name="Ellington A."/>
            <person name="Matthews N."/>
            <person name="Ellwood M."/>
            <person name="Woodmansey R."/>
            <person name="Clark G."/>
            <person name="Cooper J."/>
            <person name="Tromans A."/>
            <person name="Grafham D."/>
            <person name="Skuce C."/>
            <person name="Pandian R."/>
            <person name="Andrews R."/>
            <person name="Harrison E."/>
            <person name="Kimberley A."/>
            <person name="Garnett J."/>
            <person name="Fosker N."/>
            <person name="Hall R."/>
            <person name="Garner P."/>
            <person name="Kelly D."/>
            <person name="Bird C."/>
            <person name="Palmer S."/>
            <person name="Gehring I."/>
            <person name="Berger A."/>
            <person name="Dooley C.M."/>
            <person name="Ersan-Urun Z."/>
            <person name="Eser C."/>
            <person name="Geiger H."/>
            <person name="Geisler M."/>
            <person name="Karotki L."/>
            <person name="Kirn A."/>
            <person name="Konantz J."/>
            <person name="Konantz M."/>
            <person name="Oberlander M."/>
            <person name="Rudolph-Geiger S."/>
            <person name="Teucke M."/>
            <person name="Lanz C."/>
            <person name="Raddatz G."/>
            <person name="Osoegawa K."/>
            <person name="Zhu B."/>
            <person name="Rapp A."/>
            <person name="Widaa S."/>
            <person name="Langford C."/>
            <person name="Yang F."/>
            <person name="Schuster S.C."/>
            <person name="Carter N.P."/>
            <person name="Harrow J."/>
            <person name="Ning Z."/>
            <person name="Herrero J."/>
            <person name="Searle S.M."/>
            <person name="Enright A."/>
            <person name="Geisler R."/>
            <person name="Plasterk R.H."/>
            <person name="Lee C."/>
            <person name="Westerfield M."/>
            <person name="de Jong P.J."/>
            <person name="Zon L.I."/>
            <person name="Postlethwait J.H."/>
            <person name="Nusslein-Volhard C."/>
            <person name="Hubbard T.J."/>
            <person name="Roest Crollius H."/>
            <person name="Rogers J."/>
            <person name="Stemple D.L."/>
        </authorList>
    </citation>
    <scope>NUCLEOTIDE SEQUENCE [LARGE SCALE GENOMIC DNA]</scope>
    <source>
        <strain>Tuebingen</strain>
    </source>
</reference>
<reference evidence="6" key="2">
    <citation type="submission" date="2006-04" db="EMBL/GenBank/DDBJ databases">
        <authorList>
            <consortium name="NIH - Zebrafish Gene Collection (ZGC) project"/>
        </authorList>
    </citation>
    <scope>NUCLEOTIDE SEQUENCE [LARGE SCALE MRNA]</scope>
</reference>
<sequence>MKLKQRVVVLCAVLFLLGLAKVFLLDGGEGSAASRRDLRAFRKMEASLSLAKGARLTHTLQSPWEVAAQWVGPREVYPDETPELAAVLNALATAHVERADVGYKGTQLKALLVLDGGQKVVFKPKRYVRDYVVEGEPYAGYDRHNAEIAAFHLDRILGFRRAPLVVGRFMNLRTEIKPVATDQLLSTFLMHGNNTCFYGKCYYCRETEPACAEGDVMEGSVTLWLPDVWPLQKHRHPWGRTYREGKLARWEYDESYCEAVKKMPPYDAGPRLLDVIDTSIFDYLIGNADRHHYESFQDDGGASMLILLDNAKSFGNPSLDERSILAPLYQCCMVRVSTWNRLNLLKGGVLSSAMRQATAHDPAFPVLTGAHLTALDRRLNGVLATVRQCMETQGSENTLIEDRMNLPHP</sequence>
<comment type="function">
    <text evidence="1">Responsible for the 2-O-phosphorylation of xylose in the glycosaminoglycan-protein linkage region of proteoglycans thereby regulating the amount of mature GAG chains. Sulfated glycosaminoglycans (GAGs), including heparan sulfate and chondroitin sulfate, are synthesized on the so-called common GAG-protein linkage region (GlcUAbeta1-3Galbeta1-3Galbeta1-4Xylbeta1-O-Ser) of core proteins, which is formed by the stepwise addition of monosaccharide residues by the respective specific glycosyltransferases (By similarity).</text>
</comment>
<comment type="catalytic activity">
    <reaction evidence="1">
        <text>3-O-(beta-D-galactosyl-(1-&gt;3)-beta-D-galactosyl-(1-&gt;4)-beta-D-xylosyl)-L-seryl-[protein] + ATP = 3-O-(beta-D-galactosyl-(1-&gt;3)-beta-D-galactosyl-(1-&gt;4)-beta-D-2-O-phosphoxylosyl)-L-seryl-[protein] + ADP + H(+)</text>
        <dbReference type="Rhea" id="RHEA:19461"/>
        <dbReference type="Rhea" id="RHEA-COMP:12571"/>
        <dbReference type="Rhea" id="RHEA-COMP:14558"/>
        <dbReference type="ChEBI" id="CHEBI:15378"/>
        <dbReference type="ChEBI" id="CHEBI:30616"/>
        <dbReference type="ChEBI" id="CHEBI:132090"/>
        <dbReference type="ChEBI" id="CHEBI:140494"/>
        <dbReference type="ChEBI" id="CHEBI:456216"/>
    </reaction>
</comment>
<comment type="cofactor">
    <cofactor evidence="3">
        <name>Mn(2+)</name>
        <dbReference type="ChEBI" id="CHEBI:29035"/>
    </cofactor>
</comment>
<comment type="subcellular location">
    <subcellularLocation>
        <location evidence="1">Golgi apparatus membrane</location>
        <topology evidence="1">Single-pass type II membrane protein</topology>
    </subcellularLocation>
</comment>
<comment type="similarity">
    <text evidence="5">Belongs to the FAM20 family.</text>
</comment>
<evidence type="ECO:0000250" key="1">
    <source>
        <dbReference type="UniProtKB" id="O75063"/>
    </source>
</evidence>
<evidence type="ECO:0000250" key="2">
    <source>
        <dbReference type="UniProtKB" id="Q8IXL6"/>
    </source>
</evidence>
<evidence type="ECO:0000250" key="3">
    <source>
        <dbReference type="UniProtKB" id="Q9XTW2"/>
    </source>
</evidence>
<evidence type="ECO:0000255" key="4"/>
<evidence type="ECO:0000305" key="5"/>
<evidence type="ECO:0000312" key="6">
    <source>
        <dbReference type="EMBL" id="CAI11712.1"/>
    </source>
</evidence>
<evidence type="ECO:0000312" key="7">
    <source>
        <dbReference type="ZFIN" id="ZDB-GENE-040724-125"/>
    </source>
</evidence>
<protein>
    <recommendedName>
        <fullName evidence="1">Glycosaminoglycan xylosylkinase</fullName>
        <ecNumber evidence="1">2.7.1.-</ecNumber>
    </recommendedName>
    <alternativeName>
        <fullName evidence="1">Xylose kinase</fullName>
    </alternativeName>
</protein>
<proteinExistence type="evidence at transcript level"/>
<keyword id="KW-0067">ATP-binding</keyword>
<keyword id="KW-1015">Disulfide bond</keyword>
<keyword id="KW-0325">Glycoprotein</keyword>
<keyword id="KW-0333">Golgi apparatus</keyword>
<keyword id="KW-0418">Kinase</keyword>
<keyword id="KW-0464">Manganese</keyword>
<keyword id="KW-0472">Membrane</keyword>
<keyword id="KW-0479">Metal-binding</keyword>
<keyword id="KW-0547">Nucleotide-binding</keyword>
<keyword id="KW-1185">Reference proteome</keyword>
<keyword id="KW-0735">Signal-anchor</keyword>
<keyword id="KW-0808">Transferase</keyword>
<keyword id="KW-0812">Transmembrane</keyword>
<keyword id="KW-1133">Transmembrane helix</keyword>
<feature type="chain" id="PRO_0000408367" description="Glycosaminoglycan xylosylkinase">
    <location>
        <begin position="1"/>
        <end position="409"/>
    </location>
</feature>
<feature type="topological domain" description="Cytoplasmic" evidence="4">
    <location>
        <begin position="1"/>
        <end position="6"/>
    </location>
</feature>
<feature type="transmembrane region" description="Helical; Signal-anchor for type II membrane protein" evidence="4">
    <location>
        <begin position="7"/>
        <end position="25"/>
    </location>
</feature>
<feature type="topological domain" description="Lumenal" evidence="4">
    <location>
        <begin position="26"/>
        <end position="409"/>
    </location>
</feature>
<feature type="active site" evidence="2">
    <location>
        <position position="289"/>
    </location>
</feature>
<feature type="binding site" evidence="3">
    <location>
        <position position="107"/>
    </location>
    <ligand>
        <name>ATP</name>
        <dbReference type="ChEBI" id="CHEBI:30616"/>
    </ligand>
</feature>
<feature type="binding site" evidence="3">
    <location>
        <position position="123"/>
    </location>
    <ligand>
        <name>ATP</name>
        <dbReference type="ChEBI" id="CHEBI:30616"/>
    </ligand>
</feature>
<feature type="binding site" evidence="3">
    <location>
        <position position="142"/>
    </location>
    <ligand>
        <name>Mn(2+)</name>
        <dbReference type="ChEBI" id="CHEBI:29035"/>
    </ligand>
</feature>
<feature type="binding site" evidence="3">
    <location>
        <begin position="222"/>
        <end position="225"/>
    </location>
    <ligand>
        <name>ATP</name>
        <dbReference type="ChEBI" id="CHEBI:30616"/>
    </ligand>
</feature>
<feature type="binding site" evidence="3">
    <location>
        <position position="294"/>
    </location>
    <ligand>
        <name>ATP</name>
        <dbReference type="ChEBI" id="CHEBI:30616"/>
    </ligand>
</feature>
<feature type="binding site" evidence="3">
    <location>
        <position position="309"/>
    </location>
    <ligand>
        <name>ATP</name>
        <dbReference type="ChEBI" id="CHEBI:30616"/>
    </ligand>
</feature>
<feature type="binding site" evidence="3">
    <location>
        <position position="309"/>
    </location>
    <ligand>
        <name>Mn(2+)</name>
        <dbReference type="ChEBI" id="CHEBI:29035"/>
    </ligand>
</feature>
<feature type="glycosylation site" description="N-linked (GlcNAc...) asparagine" evidence="4">
    <location>
        <position position="193"/>
    </location>
</feature>
<feature type="disulfide bond" evidence="3">
    <location>
        <begin position="196"/>
        <end position="211"/>
    </location>
</feature>
<feature type="disulfide bond" evidence="3">
    <location>
        <begin position="201"/>
        <end position="204"/>
    </location>
</feature>
<feature type="disulfide bond" evidence="3">
    <location>
        <begin position="257"/>
        <end position="331"/>
    </location>
</feature>
<feature type="disulfide bond" evidence="3">
    <location>
        <begin position="332"/>
        <end position="389"/>
    </location>
</feature>
<name>XYLK_DANRE</name>
<dbReference type="EC" id="2.7.1.-" evidence="1"/>
<dbReference type="EMBL" id="BX571854">
    <property type="protein sequence ID" value="CAI11712.1"/>
    <property type="molecule type" value="Genomic_DNA"/>
</dbReference>
<dbReference type="EMBL" id="BC115339">
    <property type="protein sequence ID" value="AAI15340.1"/>
    <property type="molecule type" value="mRNA"/>
</dbReference>
<dbReference type="RefSeq" id="NP_001038283.1">
    <property type="nucleotide sequence ID" value="NM_001044818.1"/>
</dbReference>
<dbReference type="RefSeq" id="XP_005160477.1">
    <property type="nucleotide sequence ID" value="XM_005160420.5"/>
</dbReference>
<dbReference type="RefSeq" id="XP_009292888.1">
    <property type="nucleotide sequence ID" value="XM_009294613.4"/>
</dbReference>
<dbReference type="RefSeq" id="XP_009292889.1">
    <property type="nucleotide sequence ID" value="XM_009294614.4"/>
</dbReference>
<dbReference type="RefSeq" id="XP_068071559.1">
    <property type="nucleotide sequence ID" value="XM_068215458.1"/>
</dbReference>
<dbReference type="SMR" id="Q5RH51"/>
<dbReference type="FunCoup" id="Q5RH51">
    <property type="interactions" value="1713"/>
</dbReference>
<dbReference type="STRING" id="7955.ENSDARP00000018976"/>
<dbReference type="GlyCosmos" id="Q5RH51">
    <property type="glycosylation" value="1 site, No reported glycans"/>
</dbReference>
<dbReference type="PaxDb" id="7955-ENSDARP00000018976"/>
<dbReference type="Ensembl" id="ENSDART00000013453">
    <property type="protein sequence ID" value="ENSDARP00000018976"/>
    <property type="gene ID" value="ENSDARG00000008573"/>
</dbReference>
<dbReference type="Ensembl" id="ENSDART00000189421">
    <property type="protein sequence ID" value="ENSDARP00000146564"/>
    <property type="gene ID" value="ENSDARG00000008573"/>
</dbReference>
<dbReference type="GeneID" id="557060"/>
<dbReference type="KEGG" id="dre:557060"/>
<dbReference type="AGR" id="ZFIN:ZDB-GENE-040724-125"/>
<dbReference type="CTD" id="9917"/>
<dbReference type="ZFIN" id="ZDB-GENE-040724-125">
    <property type="gene designation" value="fam20b"/>
</dbReference>
<dbReference type="eggNOG" id="KOG3829">
    <property type="taxonomic scope" value="Eukaryota"/>
</dbReference>
<dbReference type="HOGENOM" id="CLU_028926_1_1_1"/>
<dbReference type="InParanoid" id="Q5RH51"/>
<dbReference type="OMA" id="AVWEDDM"/>
<dbReference type="OrthoDB" id="8583677at2759"/>
<dbReference type="PhylomeDB" id="Q5RH51"/>
<dbReference type="TreeFam" id="TF313276"/>
<dbReference type="PRO" id="PR:Q5RH51"/>
<dbReference type="Proteomes" id="UP000000437">
    <property type="component" value="Chromosome 20"/>
</dbReference>
<dbReference type="Bgee" id="ENSDARG00000008573">
    <property type="expression patterns" value="Expressed in muscle tissue and 40 other cell types or tissues"/>
</dbReference>
<dbReference type="ExpressionAtlas" id="Q5RH51">
    <property type="expression patterns" value="baseline and differential"/>
</dbReference>
<dbReference type="GO" id="GO:0005794">
    <property type="term" value="C:Golgi apparatus"/>
    <property type="evidence" value="ECO:0000250"/>
    <property type="project" value="UniProtKB"/>
</dbReference>
<dbReference type="GO" id="GO:0000139">
    <property type="term" value="C:Golgi membrane"/>
    <property type="evidence" value="ECO:0007669"/>
    <property type="project" value="UniProtKB-SubCell"/>
</dbReference>
<dbReference type="GO" id="GO:0005524">
    <property type="term" value="F:ATP binding"/>
    <property type="evidence" value="ECO:0007669"/>
    <property type="project" value="UniProtKB-KW"/>
</dbReference>
<dbReference type="GO" id="GO:0016301">
    <property type="term" value="F:kinase activity"/>
    <property type="evidence" value="ECO:0007669"/>
    <property type="project" value="UniProtKB-KW"/>
</dbReference>
<dbReference type="GO" id="GO:0046872">
    <property type="term" value="F:metal ion binding"/>
    <property type="evidence" value="ECO:0007669"/>
    <property type="project" value="UniProtKB-KW"/>
</dbReference>
<dbReference type="GO" id="GO:0016773">
    <property type="term" value="F:phosphotransferase activity, alcohol group as acceptor"/>
    <property type="evidence" value="ECO:0000318"/>
    <property type="project" value="GO_Central"/>
</dbReference>
<dbReference type="GO" id="GO:0048701">
    <property type="term" value="P:embryonic cranial skeleton morphogenesis"/>
    <property type="evidence" value="ECO:0000315"/>
    <property type="project" value="ZFIN"/>
</dbReference>
<dbReference type="GO" id="GO:0030166">
    <property type="term" value="P:proteoglycan biosynthetic process"/>
    <property type="evidence" value="ECO:0000315"/>
    <property type="project" value="ZFIN"/>
</dbReference>
<dbReference type="CDD" id="cd10470">
    <property type="entry name" value="FAM20B_C"/>
    <property type="match status" value="1"/>
</dbReference>
<dbReference type="InterPro" id="IPR024869">
    <property type="entry name" value="FAM20"/>
</dbReference>
<dbReference type="InterPro" id="IPR009581">
    <property type="entry name" value="FAM20_C"/>
</dbReference>
<dbReference type="PANTHER" id="PTHR12450">
    <property type="entry name" value="DENTIN MATRIX PROTEIN 4 PROTEIN FAM20"/>
    <property type="match status" value="1"/>
</dbReference>
<dbReference type="PANTHER" id="PTHR12450:SF14">
    <property type="entry name" value="GLYCOSAMINOGLYCAN XYLOSYLKINASE"/>
    <property type="match status" value="1"/>
</dbReference>
<dbReference type="Pfam" id="PF06702">
    <property type="entry name" value="Fam20C"/>
    <property type="match status" value="1"/>
</dbReference>